<reference key="1">
    <citation type="journal article" date="1992" name="Eur. J. Biochem.">
        <title>The primary structure of fatty-acid-binding protein from nurse shark liver. Structural and evolutionary relationship to the mammalian fatty-acid-binding protein family.</title>
        <authorList>
            <person name="Medzihradszky K.F."/>
            <person name="Gibson B.W."/>
            <person name="Kaur S."/>
            <person name="Yu Z."/>
            <person name="Medzihradszky D."/>
            <person name="Burlingame A.L."/>
            <person name="Bass N.M."/>
        </authorList>
    </citation>
    <scope>PROTEIN SEQUENCE</scope>
    <scope>ACETYLATION AT VAL-1</scope>
    <source>
        <tissue>Liver</tissue>
    </source>
</reference>
<accession>P80049</accession>
<dbReference type="PIR" id="S20297">
    <property type="entry name" value="S20297"/>
</dbReference>
<dbReference type="SMR" id="P80049"/>
<dbReference type="iPTMnet" id="P80049"/>
<dbReference type="GO" id="GO:0005737">
    <property type="term" value="C:cytoplasm"/>
    <property type="evidence" value="ECO:0007669"/>
    <property type="project" value="UniProtKB-SubCell"/>
</dbReference>
<dbReference type="GO" id="GO:0008289">
    <property type="term" value="F:lipid binding"/>
    <property type="evidence" value="ECO:0007669"/>
    <property type="project" value="UniProtKB-KW"/>
</dbReference>
<dbReference type="CDD" id="cd19443">
    <property type="entry name" value="FABP3-like"/>
    <property type="match status" value="1"/>
</dbReference>
<dbReference type="FunFam" id="2.40.128.20:FF:000001">
    <property type="entry name" value="Fatty acid-binding protein, adipocyte"/>
    <property type="match status" value="1"/>
</dbReference>
<dbReference type="Gene3D" id="2.40.128.20">
    <property type="match status" value="1"/>
</dbReference>
<dbReference type="InterPro" id="IPR012674">
    <property type="entry name" value="Calycin"/>
</dbReference>
<dbReference type="InterPro" id="IPR000463">
    <property type="entry name" value="Fatty_acid-bd"/>
</dbReference>
<dbReference type="InterPro" id="IPR031259">
    <property type="entry name" value="ILBP"/>
</dbReference>
<dbReference type="InterPro" id="IPR000566">
    <property type="entry name" value="Lipocln_cytosolic_FA-bd_dom"/>
</dbReference>
<dbReference type="PANTHER" id="PTHR11955">
    <property type="entry name" value="FATTY ACID BINDING PROTEIN"/>
    <property type="match status" value="1"/>
</dbReference>
<dbReference type="Pfam" id="PF00061">
    <property type="entry name" value="Lipocalin"/>
    <property type="match status" value="1"/>
</dbReference>
<dbReference type="PRINTS" id="PR00178">
    <property type="entry name" value="FATTYACIDBP"/>
</dbReference>
<dbReference type="SUPFAM" id="SSF50814">
    <property type="entry name" value="Lipocalins"/>
    <property type="match status" value="1"/>
</dbReference>
<dbReference type="PROSITE" id="PS00214">
    <property type="entry name" value="FABP"/>
    <property type="match status" value="1"/>
</dbReference>
<proteinExistence type="evidence at protein level"/>
<comment type="function">
    <text>FABPs are thought to play a role in the intracellular transport of long-chain fatty acids and their acyl-CoA esters.</text>
</comment>
<comment type="subcellular location">
    <subcellularLocation>
        <location>Cytoplasm</location>
    </subcellularLocation>
</comment>
<comment type="domain">
    <text evidence="1">Forms a beta-barrel structure that accommodates hydrophobic ligands in its interior.</text>
</comment>
<comment type="similarity">
    <text evidence="4">Belongs to the calycin superfamily. Fatty-acid binding protein (FABP) family.</text>
</comment>
<feature type="chain" id="PRO_0000067346" description="Fatty acid-binding protein, liver">
    <location>
        <begin position="1"/>
        <end position="132"/>
    </location>
</feature>
<feature type="modified residue" description="N-acetylvaline" evidence="3">
    <location>
        <position position="1"/>
    </location>
</feature>
<feature type="modified residue" description="Phosphotyrosine; by Tyr-kinases" evidence="2">
    <location>
        <position position="19"/>
    </location>
</feature>
<protein>
    <recommendedName>
        <fullName>Fatty acid-binding protein, liver</fullName>
    </recommendedName>
    <alternativeName>
        <fullName>Liver-type fatty acid-binding protein</fullName>
        <shortName>L-FABP</shortName>
    </alternativeName>
</protein>
<name>FABPL_GINCI</name>
<keyword id="KW-0007">Acetylation</keyword>
<keyword id="KW-0963">Cytoplasm</keyword>
<keyword id="KW-0903">Direct protein sequencing</keyword>
<keyword id="KW-0446">Lipid-binding</keyword>
<keyword id="KW-0597">Phosphoprotein</keyword>
<keyword id="KW-0813">Transport</keyword>
<evidence type="ECO:0000250" key="1"/>
<evidence type="ECO:0000255" key="2"/>
<evidence type="ECO:0000269" key="3">
    <source>
    </source>
</evidence>
<evidence type="ECO:0000305" key="4"/>
<sequence length="132" mass="15079">VEAFLGSWKLQKSHNFDEYMKNLDVSLAQRKVATTVKPKTIISLDGDVITIKTESTFKSTNIQFKLAEEFDETTADNRTTKTTVKLENGKLVQTQRWDGKETTLVRELQDGKLILTCTMGDVVCTREYVREQ</sequence>
<organism>
    <name type="scientific">Ginglymostoma cirratum</name>
    <name type="common">Nurse shark</name>
    <name type="synonym">Squalus cirratus</name>
    <dbReference type="NCBI Taxonomy" id="7801"/>
    <lineage>
        <taxon>Eukaryota</taxon>
        <taxon>Metazoa</taxon>
        <taxon>Chordata</taxon>
        <taxon>Craniata</taxon>
        <taxon>Vertebrata</taxon>
        <taxon>Chondrichthyes</taxon>
        <taxon>Elasmobranchii</taxon>
        <taxon>Galeomorphii</taxon>
        <taxon>Galeoidea</taxon>
        <taxon>Orectolobiformes</taxon>
        <taxon>Ginglymostomatidae</taxon>
        <taxon>Ginglymostoma</taxon>
    </lineage>
</organism>